<evidence type="ECO:0000255" key="1">
    <source>
        <dbReference type="HAMAP-Rule" id="MF_01590"/>
    </source>
</evidence>
<comment type="function">
    <text evidence="1">Catalyzes carboxymethyl transfer from carboxy-S-adenosyl-L-methionine (Cx-SAM) to 5-hydroxyuridine (ho5U) to form 5-carboxymethoxyuridine (cmo5U) at position 34 in tRNAs.</text>
</comment>
<comment type="catalytic activity">
    <reaction evidence="1">
        <text>carboxy-S-adenosyl-L-methionine + 5-hydroxyuridine(34) in tRNA = 5-carboxymethoxyuridine(34) in tRNA + S-adenosyl-L-homocysteine + H(+)</text>
        <dbReference type="Rhea" id="RHEA:52848"/>
        <dbReference type="Rhea" id="RHEA-COMP:13381"/>
        <dbReference type="Rhea" id="RHEA-COMP:13383"/>
        <dbReference type="ChEBI" id="CHEBI:15378"/>
        <dbReference type="ChEBI" id="CHEBI:57856"/>
        <dbReference type="ChEBI" id="CHEBI:134278"/>
        <dbReference type="ChEBI" id="CHEBI:136877"/>
        <dbReference type="ChEBI" id="CHEBI:136879"/>
    </reaction>
</comment>
<comment type="subunit">
    <text evidence="1">Homotetramer.</text>
</comment>
<comment type="similarity">
    <text evidence="1">Belongs to the class I-like SAM-binding methyltransferase superfamily. CmoB family.</text>
</comment>
<name>CMOB_SHIF8</name>
<sequence length="323" mass="37157">MIDFGNFYSLIAKNHLSHWLETLPAQIANWQREQQHGLFKQWSNTVEFLPEIKPYRLDLLHSVTAESEEPLSTGQIKRIETLMRNLMPWRKGPFSLYGVNIDTEWRSDWKWDRVLPHLSDLTGRTILDVGCGSGYHMWRMIGAGAHLAVGIDPTQLFLCQFEAVRKLLGNDQRAHLLPLGIEQLPALKAFDTVFSMGVLYHRRSPLEHLWQLKDQLVNEGELVLETLVIDGDENTVLVPGDRYAQMRNVYFIPSALALKNWLKKCGFVDIRIVDVCVTTTEEQRRTEWMVTESLSDFLDPHDPSKTVEGYPAPKRAVLIARKP</sequence>
<keyword id="KW-0808">Transferase</keyword>
<keyword id="KW-0819">tRNA processing</keyword>
<accession>Q0T3Q7</accession>
<gene>
    <name evidence="1" type="primary">cmoB</name>
    <name type="ordered locus">SFV_1907</name>
</gene>
<protein>
    <recommendedName>
        <fullName evidence="1">tRNA U34 carboxymethyltransferase</fullName>
        <ecNumber evidence="1">2.5.1.-</ecNumber>
    </recommendedName>
</protein>
<dbReference type="EC" id="2.5.1.-" evidence="1"/>
<dbReference type="EMBL" id="CP000266">
    <property type="protein sequence ID" value="ABF04058.1"/>
    <property type="molecule type" value="Genomic_DNA"/>
</dbReference>
<dbReference type="RefSeq" id="WP_000564755.1">
    <property type="nucleotide sequence ID" value="NC_008258.1"/>
</dbReference>
<dbReference type="SMR" id="Q0T3Q7"/>
<dbReference type="KEGG" id="sfv:SFV_1907"/>
<dbReference type="HOGENOM" id="CLU_052665_0_0_6"/>
<dbReference type="Proteomes" id="UP000000659">
    <property type="component" value="Chromosome"/>
</dbReference>
<dbReference type="GO" id="GO:0016765">
    <property type="term" value="F:transferase activity, transferring alkyl or aryl (other than methyl) groups"/>
    <property type="evidence" value="ECO:0007669"/>
    <property type="project" value="UniProtKB-UniRule"/>
</dbReference>
<dbReference type="GO" id="GO:0002098">
    <property type="term" value="P:tRNA wobble uridine modification"/>
    <property type="evidence" value="ECO:0007669"/>
    <property type="project" value="InterPro"/>
</dbReference>
<dbReference type="CDD" id="cd02440">
    <property type="entry name" value="AdoMet_MTases"/>
    <property type="match status" value="1"/>
</dbReference>
<dbReference type="FunFam" id="3.40.50.150:FF:000080">
    <property type="entry name" value="tRNA U34 carboxymethyltransferase"/>
    <property type="match status" value="1"/>
</dbReference>
<dbReference type="Gene3D" id="3.40.50.150">
    <property type="entry name" value="Vaccinia Virus protein VP39"/>
    <property type="match status" value="1"/>
</dbReference>
<dbReference type="HAMAP" id="MF_01590">
    <property type="entry name" value="tRNA_carboxymethyltr_CmoB"/>
    <property type="match status" value="1"/>
</dbReference>
<dbReference type="InterPro" id="IPR010017">
    <property type="entry name" value="CmoB"/>
</dbReference>
<dbReference type="InterPro" id="IPR027555">
    <property type="entry name" value="Mo5U34_MeTrfas-like"/>
</dbReference>
<dbReference type="InterPro" id="IPR029063">
    <property type="entry name" value="SAM-dependent_MTases_sf"/>
</dbReference>
<dbReference type="NCBIfam" id="NF011650">
    <property type="entry name" value="PRK15068.1"/>
    <property type="match status" value="1"/>
</dbReference>
<dbReference type="NCBIfam" id="TIGR00452">
    <property type="entry name" value="tRNA 5-methoxyuridine(34)/uridine 5-oxyacetic acid(34) synthase CmoB"/>
    <property type="match status" value="1"/>
</dbReference>
<dbReference type="PANTHER" id="PTHR43861:SF3">
    <property type="entry name" value="PUTATIVE (AFU_ORTHOLOGUE AFUA_2G14390)-RELATED"/>
    <property type="match status" value="1"/>
</dbReference>
<dbReference type="PANTHER" id="PTHR43861">
    <property type="entry name" value="TRANS-ACONITATE 2-METHYLTRANSFERASE-RELATED"/>
    <property type="match status" value="1"/>
</dbReference>
<dbReference type="Pfam" id="PF08003">
    <property type="entry name" value="Methyltransf_9"/>
    <property type="match status" value="1"/>
</dbReference>
<dbReference type="SUPFAM" id="SSF53335">
    <property type="entry name" value="S-adenosyl-L-methionine-dependent methyltransferases"/>
    <property type="match status" value="1"/>
</dbReference>
<proteinExistence type="inferred from homology"/>
<feature type="chain" id="PRO_0000313978" description="tRNA U34 carboxymethyltransferase">
    <location>
        <begin position="1"/>
        <end position="323"/>
    </location>
</feature>
<feature type="binding site" evidence="1">
    <location>
        <position position="91"/>
    </location>
    <ligand>
        <name>carboxy-S-adenosyl-L-methionine</name>
        <dbReference type="ChEBI" id="CHEBI:134278"/>
    </ligand>
</feature>
<feature type="binding site" evidence="1">
    <location>
        <position position="105"/>
    </location>
    <ligand>
        <name>carboxy-S-adenosyl-L-methionine</name>
        <dbReference type="ChEBI" id="CHEBI:134278"/>
    </ligand>
</feature>
<feature type="binding site" evidence="1">
    <location>
        <position position="110"/>
    </location>
    <ligand>
        <name>carboxy-S-adenosyl-L-methionine</name>
        <dbReference type="ChEBI" id="CHEBI:134278"/>
    </ligand>
</feature>
<feature type="binding site" evidence="1">
    <location>
        <position position="130"/>
    </location>
    <ligand>
        <name>carboxy-S-adenosyl-L-methionine</name>
        <dbReference type="ChEBI" id="CHEBI:134278"/>
    </ligand>
</feature>
<feature type="binding site" evidence="1">
    <location>
        <begin position="152"/>
        <end position="154"/>
    </location>
    <ligand>
        <name>carboxy-S-adenosyl-L-methionine</name>
        <dbReference type="ChEBI" id="CHEBI:134278"/>
    </ligand>
</feature>
<feature type="binding site" evidence="1">
    <location>
        <begin position="181"/>
        <end position="182"/>
    </location>
    <ligand>
        <name>carboxy-S-adenosyl-L-methionine</name>
        <dbReference type="ChEBI" id="CHEBI:134278"/>
    </ligand>
</feature>
<feature type="binding site" evidence="1">
    <location>
        <position position="196"/>
    </location>
    <ligand>
        <name>carboxy-S-adenosyl-L-methionine</name>
        <dbReference type="ChEBI" id="CHEBI:134278"/>
    </ligand>
</feature>
<feature type="binding site" evidence="1">
    <location>
        <position position="200"/>
    </location>
    <ligand>
        <name>carboxy-S-adenosyl-L-methionine</name>
        <dbReference type="ChEBI" id="CHEBI:134278"/>
    </ligand>
</feature>
<feature type="binding site" evidence="1">
    <location>
        <position position="315"/>
    </location>
    <ligand>
        <name>carboxy-S-adenosyl-L-methionine</name>
        <dbReference type="ChEBI" id="CHEBI:134278"/>
    </ligand>
</feature>
<reference key="1">
    <citation type="journal article" date="2006" name="BMC Genomics">
        <title>Complete genome sequence of Shigella flexneri 5b and comparison with Shigella flexneri 2a.</title>
        <authorList>
            <person name="Nie H."/>
            <person name="Yang F."/>
            <person name="Zhang X."/>
            <person name="Yang J."/>
            <person name="Chen L."/>
            <person name="Wang J."/>
            <person name="Xiong Z."/>
            <person name="Peng J."/>
            <person name="Sun L."/>
            <person name="Dong J."/>
            <person name="Xue Y."/>
            <person name="Xu X."/>
            <person name="Chen S."/>
            <person name="Yao Z."/>
            <person name="Shen Y."/>
            <person name="Jin Q."/>
        </authorList>
    </citation>
    <scope>NUCLEOTIDE SEQUENCE [LARGE SCALE GENOMIC DNA]</scope>
    <source>
        <strain>8401</strain>
    </source>
</reference>
<organism>
    <name type="scientific">Shigella flexneri serotype 5b (strain 8401)</name>
    <dbReference type="NCBI Taxonomy" id="373384"/>
    <lineage>
        <taxon>Bacteria</taxon>
        <taxon>Pseudomonadati</taxon>
        <taxon>Pseudomonadota</taxon>
        <taxon>Gammaproteobacteria</taxon>
        <taxon>Enterobacterales</taxon>
        <taxon>Enterobacteriaceae</taxon>
        <taxon>Shigella</taxon>
    </lineage>
</organism>